<comment type="function">
    <text evidence="1">Seems to be required for maximal rate of protein biosynthesis. Enhances ribosome dissociation into subunits and stabilizes the binding of the initiator Met-tRNA(I) to 40 S ribosomal subunits.</text>
</comment>
<comment type="similarity">
    <text evidence="1">Belongs to the eIF-1A family.</text>
</comment>
<accession>C3MU29</accession>
<keyword id="KW-0396">Initiation factor</keyword>
<keyword id="KW-0648">Protein biosynthesis</keyword>
<organism>
    <name type="scientific">Saccharolobus islandicus (strain M.14.25 / Kamchatka #1)</name>
    <name type="common">Sulfolobus islandicus</name>
    <dbReference type="NCBI Taxonomy" id="427317"/>
    <lineage>
        <taxon>Archaea</taxon>
        <taxon>Thermoproteota</taxon>
        <taxon>Thermoprotei</taxon>
        <taxon>Sulfolobales</taxon>
        <taxon>Sulfolobaceae</taxon>
        <taxon>Saccharolobus</taxon>
    </lineage>
</organism>
<protein>
    <recommendedName>
        <fullName evidence="1">Translation initiation factor 1A</fullName>
        <shortName evidence="1">aIF-1A</shortName>
    </recommendedName>
</protein>
<sequence>MPKKDRAQEAPSRDVPKPEEGQTICVVKKMLGGDHLVVLCMDGKERLARIPGKIRKKMWMREGDVVLVGIWDFQPNRCDILYKYGNDEIKRLVNENIISREVIDQLRG</sequence>
<dbReference type="EMBL" id="CP001400">
    <property type="protein sequence ID" value="ACP37063.1"/>
    <property type="molecule type" value="Genomic_DNA"/>
</dbReference>
<dbReference type="RefSeq" id="WP_012710350.1">
    <property type="nucleotide sequence ID" value="NC_012588.1"/>
</dbReference>
<dbReference type="SMR" id="C3MU29"/>
<dbReference type="KEGG" id="sia:M1425_0172"/>
<dbReference type="HOGENOM" id="CLU_109098_1_2_2"/>
<dbReference type="Proteomes" id="UP000001350">
    <property type="component" value="Chromosome"/>
</dbReference>
<dbReference type="GO" id="GO:0003723">
    <property type="term" value="F:RNA binding"/>
    <property type="evidence" value="ECO:0007669"/>
    <property type="project" value="InterPro"/>
</dbReference>
<dbReference type="GO" id="GO:0003743">
    <property type="term" value="F:translation initiation factor activity"/>
    <property type="evidence" value="ECO:0007669"/>
    <property type="project" value="UniProtKB-UniRule"/>
</dbReference>
<dbReference type="CDD" id="cd05793">
    <property type="entry name" value="S1_IF1A"/>
    <property type="match status" value="1"/>
</dbReference>
<dbReference type="Gene3D" id="2.40.50.140">
    <property type="entry name" value="Nucleic acid-binding proteins"/>
    <property type="match status" value="1"/>
</dbReference>
<dbReference type="HAMAP" id="MF_00216">
    <property type="entry name" value="aIF_1A"/>
    <property type="match status" value="1"/>
</dbReference>
<dbReference type="InterPro" id="IPR012340">
    <property type="entry name" value="NA-bd_OB-fold"/>
</dbReference>
<dbReference type="InterPro" id="IPR006196">
    <property type="entry name" value="RNA-binding_domain_S1_IF1"/>
</dbReference>
<dbReference type="InterPro" id="IPR001253">
    <property type="entry name" value="TIF_eIF-1A"/>
</dbReference>
<dbReference type="InterPro" id="IPR018104">
    <property type="entry name" value="TIF_eIF-1A_CS"/>
</dbReference>
<dbReference type="NCBIfam" id="TIGR00523">
    <property type="entry name" value="eIF-1A"/>
    <property type="match status" value="1"/>
</dbReference>
<dbReference type="NCBIfam" id="NF003082">
    <property type="entry name" value="PRK04012.1-1"/>
    <property type="match status" value="1"/>
</dbReference>
<dbReference type="NCBIfam" id="NF003084">
    <property type="entry name" value="PRK04012.1-3"/>
    <property type="match status" value="1"/>
</dbReference>
<dbReference type="NCBIfam" id="NF003085">
    <property type="entry name" value="PRK04012.1-5"/>
    <property type="match status" value="1"/>
</dbReference>
<dbReference type="PANTHER" id="PTHR21668">
    <property type="entry name" value="EIF-1A"/>
    <property type="match status" value="1"/>
</dbReference>
<dbReference type="Pfam" id="PF01176">
    <property type="entry name" value="eIF-1a"/>
    <property type="match status" value="1"/>
</dbReference>
<dbReference type="SMART" id="SM00652">
    <property type="entry name" value="eIF1a"/>
    <property type="match status" value="1"/>
</dbReference>
<dbReference type="SUPFAM" id="SSF50249">
    <property type="entry name" value="Nucleic acid-binding proteins"/>
    <property type="match status" value="1"/>
</dbReference>
<dbReference type="PROSITE" id="PS01262">
    <property type="entry name" value="IF1A"/>
    <property type="match status" value="1"/>
</dbReference>
<dbReference type="PROSITE" id="PS50832">
    <property type="entry name" value="S1_IF1_TYPE"/>
    <property type="match status" value="1"/>
</dbReference>
<reference key="1">
    <citation type="journal article" date="2009" name="Proc. Natl. Acad. Sci. U.S.A.">
        <title>Biogeography of the Sulfolobus islandicus pan-genome.</title>
        <authorList>
            <person name="Reno M.L."/>
            <person name="Held N.L."/>
            <person name="Fields C.J."/>
            <person name="Burke P.V."/>
            <person name="Whitaker R.J."/>
        </authorList>
    </citation>
    <scope>NUCLEOTIDE SEQUENCE [LARGE SCALE GENOMIC DNA]</scope>
    <source>
        <strain>M.14.25 / Kamchatka #1</strain>
    </source>
</reference>
<gene>
    <name type="primary">eIF1A</name>
    <name type="ordered locus">M1425_0172</name>
</gene>
<evidence type="ECO:0000255" key="1">
    <source>
        <dbReference type="HAMAP-Rule" id="MF_00216"/>
    </source>
</evidence>
<name>IF1A_SACI4</name>
<proteinExistence type="inferred from homology"/>
<feature type="chain" id="PRO_1000204224" description="Translation initiation factor 1A">
    <location>
        <begin position="1"/>
        <end position="108"/>
    </location>
</feature>
<feature type="domain" description="S1-like" evidence="1">
    <location>
        <begin position="11"/>
        <end position="85"/>
    </location>
</feature>